<sequence length="93" mass="10758">MSRSAKKGPFIHKGLLRKIEEMNEKDEKKVIKVWSRASTIFPQMIGHTIAVHDGRKHVPVYVTEDMVGHKLGEFALTRTYRGHDDDEKTSKRK</sequence>
<proteinExistence type="inferred from homology"/>
<comment type="function">
    <text evidence="1">Protein S19 forms a complex with S13 that binds strongly to the 16S ribosomal RNA.</text>
</comment>
<comment type="similarity">
    <text evidence="1">Belongs to the universal ribosomal protein uS19 family.</text>
</comment>
<protein>
    <recommendedName>
        <fullName evidence="1">Small ribosomal subunit protein uS19</fullName>
    </recommendedName>
    <alternativeName>
        <fullName evidence="2">30S ribosomal protein S19</fullName>
    </alternativeName>
</protein>
<feature type="chain" id="PRO_1000060987" description="Small ribosomal subunit protein uS19">
    <location>
        <begin position="1"/>
        <end position="93"/>
    </location>
</feature>
<organism>
    <name type="scientific">Alkaliphilus metalliredigens (strain QYMF)</name>
    <dbReference type="NCBI Taxonomy" id="293826"/>
    <lineage>
        <taxon>Bacteria</taxon>
        <taxon>Bacillati</taxon>
        <taxon>Bacillota</taxon>
        <taxon>Clostridia</taxon>
        <taxon>Peptostreptococcales</taxon>
        <taxon>Natronincolaceae</taxon>
        <taxon>Alkaliphilus</taxon>
    </lineage>
</organism>
<keyword id="KW-1185">Reference proteome</keyword>
<keyword id="KW-0687">Ribonucleoprotein</keyword>
<keyword id="KW-0689">Ribosomal protein</keyword>
<keyword id="KW-0694">RNA-binding</keyword>
<keyword id="KW-0699">rRNA-binding</keyword>
<accession>A6TWH8</accession>
<name>RS19_ALKMQ</name>
<dbReference type="EMBL" id="CP000724">
    <property type="protein sequence ID" value="ABR50546.1"/>
    <property type="molecule type" value="Genomic_DNA"/>
</dbReference>
<dbReference type="RefSeq" id="WP_012065437.1">
    <property type="nucleotide sequence ID" value="NC_009633.1"/>
</dbReference>
<dbReference type="SMR" id="A6TWH8"/>
<dbReference type="STRING" id="293826.Amet_4474"/>
<dbReference type="KEGG" id="amt:Amet_4474"/>
<dbReference type="eggNOG" id="COG0185">
    <property type="taxonomic scope" value="Bacteria"/>
</dbReference>
<dbReference type="HOGENOM" id="CLU_144911_0_1_9"/>
<dbReference type="OrthoDB" id="9797833at2"/>
<dbReference type="Proteomes" id="UP000001572">
    <property type="component" value="Chromosome"/>
</dbReference>
<dbReference type="GO" id="GO:0005737">
    <property type="term" value="C:cytoplasm"/>
    <property type="evidence" value="ECO:0007669"/>
    <property type="project" value="UniProtKB-ARBA"/>
</dbReference>
<dbReference type="GO" id="GO:0015935">
    <property type="term" value="C:small ribosomal subunit"/>
    <property type="evidence" value="ECO:0007669"/>
    <property type="project" value="InterPro"/>
</dbReference>
<dbReference type="GO" id="GO:0019843">
    <property type="term" value="F:rRNA binding"/>
    <property type="evidence" value="ECO:0007669"/>
    <property type="project" value="UniProtKB-UniRule"/>
</dbReference>
<dbReference type="GO" id="GO:0003735">
    <property type="term" value="F:structural constituent of ribosome"/>
    <property type="evidence" value="ECO:0007669"/>
    <property type="project" value="InterPro"/>
</dbReference>
<dbReference type="GO" id="GO:0000028">
    <property type="term" value="P:ribosomal small subunit assembly"/>
    <property type="evidence" value="ECO:0007669"/>
    <property type="project" value="TreeGrafter"/>
</dbReference>
<dbReference type="GO" id="GO:0006412">
    <property type="term" value="P:translation"/>
    <property type="evidence" value="ECO:0007669"/>
    <property type="project" value="UniProtKB-UniRule"/>
</dbReference>
<dbReference type="FunFam" id="3.30.860.10:FF:000001">
    <property type="entry name" value="30S ribosomal protein S19"/>
    <property type="match status" value="1"/>
</dbReference>
<dbReference type="Gene3D" id="3.30.860.10">
    <property type="entry name" value="30s Ribosomal Protein S19, Chain A"/>
    <property type="match status" value="1"/>
</dbReference>
<dbReference type="HAMAP" id="MF_00531">
    <property type="entry name" value="Ribosomal_uS19"/>
    <property type="match status" value="1"/>
</dbReference>
<dbReference type="InterPro" id="IPR002222">
    <property type="entry name" value="Ribosomal_uS19"/>
</dbReference>
<dbReference type="InterPro" id="IPR005732">
    <property type="entry name" value="Ribosomal_uS19_bac-type"/>
</dbReference>
<dbReference type="InterPro" id="IPR020934">
    <property type="entry name" value="Ribosomal_uS19_CS"/>
</dbReference>
<dbReference type="InterPro" id="IPR023575">
    <property type="entry name" value="Ribosomal_uS19_SF"/>
</dbReference>
<dbReference type="NCBIfam" id="TIGR01050">
    <property type="entry name" value="rpsS_bact"/>
    <property type="match status" value="1"/>
</dbReference>
<dbReference type="PANTHER" id="PTHR11880">
    <property type="entry name" value="RIBOSOMAL PROTEIN S19P FAMILY MEMBER"/>
    <property type="match status" value="1"/>
</dbReference>
<dbReference type="PANTHER" id="PTHR11880:SF8">
    <property type="entry name" value="SMALL RIBOSOMAL SUBUNIT PROTEIN US19M"/>
    <property type="match status" value="1"/>
</dbReference>
<dbReference type="Pfam" id="PF00203">
    <property type="entry name" value="Ribosomal_S19"/>
    <property type="match status" value="1"/>
</dbReference>
<dbReference type="PIRSF" id="PIRSF002144">
    <property type="entry name" value="Ribosomal_S19"/>
    <property type="match status" value="1"/>
</dbReference>
<dbReference type="PRINTS" id="PR00975">
    <property type="entry name" value="RIBOSOMALS19"/>
</dbReference>
<dbReference type="SUPFAM" id="SSF54570">
    <property type="entry name" value="Ribosomal protein S19"/>
    <property type="match status" value="1"/>
</dbReference>
<dbReference type="PROSITE" id="PS00323">
    <property type="entry name" value="RIBOSOMAL_S19"/>
    <property type="match status" value="1"/>
</dbReference>
<reference key="1">
    <citation type="journal article" date="2016" name="Genome Announc.">
        <title>Complete genome sequence of Alkaliphilus metalliredigens strain QYMF, an alkaliphilic and metal-reducing bacterium isolated from borax-contaminated leachate ponds.</title>
        <authorList>
            <person name="Hwang C."/>
            <person name="Copeland A."/>
            <person name="Lucas S."/>
            <person name="Lapidus A."/>
            <person name="Barry K."/>
            <person name="Detter J.C."/>
            <person name="Glavina Del Rio T."/>
            <person name="Hammon N."/>
            <person name="Israni S."/>
            <person name="Dalin E."/>
            <person name="Tice H."/>
            <person name="Pitluck S."/>
            <person name="Chertkov O."/>
            <person name="Brettin T."/>
            <person name="Bruce D."/>
            <person name="Han C."/>
            <person name="Schmutz J."/>
            <person name="Larimer F."/>
            <person name="Land M.L."/>
            <person name="Hauser L."/>
            <person name="Kyrpides N."/>
            <person name="Mikhailova N."/>
            <person name="Ye Q."/>
            <person name="Zhou J."/>
            <person name="Richardson P."/>
            <person name="Fields M.W."/>
        </authorList>
    </citation>
    <scope>NUCLEOTIDE SEQUENCE [LARGE SCALE GENOMIC DNA]</scope>
    <source>
        <strain>QYMF</strain>
    </source>
</reference>
<evidence type="ECO:0000255" key="1">
    <source>
        <dbReference type="HAMAP-Rule" id="MF_00531"/>
    </source>
</evidence>
<evidence type="ECO:0000305" key="2"/>
<gene>
    <name evidence="1" type="primary">rpsS</name>
    <name type="ordered locus">Amet_4474</name>
</gene>